<reference key="1">
    <citation type="journal article" date="1993" name="J. Cell Sci.">
        <title>The highly divergent alpha- and beta-tubulins from Dictyostelium discoideum are encoded by single genes.</title>
        <authorList>
            <person name="Trivinos-Lagos L."/>
            <person name="Ohmachi T."/>
            <person name="Albrightson C."/>
            <person name="Burns R.G."/>
            <person name="Ennis H.L."/>
            <person name="Chisholm R.L."/>
        </authorList>
    </citation>
    <scope>NUCLEOTIDE SEQUENCE [MRNA]</scope>
    <source>
        <strain>AX3</strain>
    </source>
</reference>
<reference key="2">
    <citation type="journal article" date="2005" name="Nature">
        <title>The genome of the social amoeba Dictyostelium discoideum.</title>
        <authorList>
            <person name="Eichinger L."/>
            <person name="Pachebat J.A."/>
            <person name="Gloeckner G."/>
            <person name="Rajandream M.A."/>
            <person name="Sucgang R."/>
            <person name="Berriman M."/>
            <person name="Song J."/>
            <person name="Olsen R."/>
            <person name="Szafranski K."/>
            <person name="Xu Q."/>
            <person name="Tunggal B."/>
            <person name="Kummerfeld S."/>
            <person name="Madera M."/>
            <person name="Konfortov B.A."/>
            <person name="Rivero F."/>
            <person name="Bankier A.T."/>
            <person name="Lehmann R."/>
            <person name="Hamlin N."/>
            <person name="Davies R."/>
            <person name="Gaudet P."/>
            <person name="Fey P."/>
            <person name="Pilcher K."/>
            <person name="Chen G."/>
            <person name="Saunders D."/>
            <person name="Sodergren E.J."/>
            <person name="Davis P."/>
            <person name="Kerhornou A."/>
            <person name="Nie X."/>
            <person name="Hall N."/>
            <person name="Anjard C."/>
            <person name="Hemphill L."/>
            <person name="Bason N."/>
            <person name="Farbrother P."/>
            <person name="Desany B."/>
            <person name="Just E."/>
            <person name="Morio T."/>
            <person name="Rost R."/>
            <person name="Churcher C.M."/>
            <person name="Cooper J."/>
            <person name="Haydock S."/>
            <person name="van Driessche N."/>
            <person name="Cronin A."/>
            <person name="Goodhead I."/>
            <person name="Muzny D.M."/>
            <person name="Mourier T."/>
            <person name="Pain A."/>
            <person name="Lu M."/>
            <person name="Harper D."/>
            <person name="Lindsay R."/>
            <person name="Hauser H."/>
            <person name="James K.D."/>
            <person name="Quiles M."/>
            <person name="Madan Babu M."/>
            <person name="Saito T."/>
            <person name="Buchrieser C."/>
            <person name="Wardroper A."/>
            <person name="Felder M."/>
            <person name="Thangavelu M."/>
            <person name="Johnson D."/>
            <person name="Knights A."/>
            <person name="Loulseged H."/>
            <person name="Mungall K.L."/>
            <person name="Oliver K."/>
            <person name="Price C."/>
            <person name="Quail M.A."/>
            <person name="Urushihara H."/>
            <person name="Hernandez J."/>
            <person name="Rabbinowitsch E."/>
            <person name="Steffen D."/>
            <person name="Sanders M."/>
            <person name="Ma J."/>
            <person name="Kohara Y."/>
            <person name="Sharp S."/>
            <person name="Simmonds M.N."/>
            <person name="Spiegler S."/>
            <person name="Tivey A."/>
            <person name="Sugano S."/>
            <person name="White B."/>
            <person name="Walker D."/>
            <person name="Woodward J.R."/>
            <person name="Winckler T."/>
            <person name="Tanaka Y."/>
            <person name="Shaulsky G."/>
            <person name="Schleicher M."/>
            <person name="Weinstock G.M."/>
            <person name="Rosenthal A."/>
            <person name="Cox E.C."/>
            <person name="Chisholm R.L."/>
            <person name="Gibbs R.A."/>
            <person name="Loomis W.F."/>
            <person name="Platzer M."/>
            <person name="Kay R.R."/>
            <person name="Williams J.G."/>
            <person name="Dear P.H."/>
            <person name="Noegel A.A."/>
            <person name="Barrell B.G."/>
            <person name="Kuspa A."/>
        </authorList>
    </citation>
    <scope>NUCLEOTIDE SEQUENCE [LARGE SCALE GENOMIC DNA]</scope>
    <source>
        <strain>AX4</strain>
    </source>
</reference>
<reference key="3">
    <citation type="journal article" date="2006" name="Science">
        <title>Molecular phylogeny and evolution of morphology in the social amoebas.</title>
        <authorList>
            <person name="Schaap P."/>
            <person name="Winckler T."/>
            <person name="Nelson M."/>
            <person name="Alvarez-Curto E."/>
            <person name="Elgie B."/>
            <person name="Hagiwara H."/>
            <person name="Cavender J."/>
            <person name="Milano-Curto A."/>
            <person name="Rozen D.E."/>
            <person name="Dingermann T."/>
            <person name="Mutzel R."/>
            <person name="Baldauf S.L."/>
        </authorList>
    </citation>
    <scope>NUCLEOTIDE SEQUENCE [GENOMIC DNA] OF 101-428</scope>
    <source>
        <strain>V34</strain>
    </source>
</reference>
<reference key="4">
    <citation type="journal article" date="2006" name="J. Proteome Res.">
        <title>Identification of novel centrosomal proteins in Dictyostelium discoideum by comparative proteomic approaches.</title>
        <authorList>
            <person name="Reinders Y."/>
            <person name="Schulz I."/>
            <person name="Graef R."/>
            <person name="Sickmann A."/>
        </authorList>
    </citation>
    <scope>IDENTIFICATION BY MASS SPECTROMETRY [LARGE SCALE ANALYSIS]</scope>
</reference>
<reference key="5">
    <citation type="journal article" date="2006" name="Mol. Cell. Proteomics">
        <title>Proteomics fingerprinting of phagosome maturation and evidence for the role of a Galpha during uptake.</title>
        <authorList>
            <person name="Gotthardt D."/>
            <person name="Blancheteau V."/>
            <person name="Bosserhoff A."/>
            <person name="Ruppert T."/>
            <person name="Delorenzi M."/>
            <person name="Soldati T."/>
        </authorList>
    </citation>
    <scope>IDENTIFICATION BY MASS SPECTROMETRY [LARGE SCALE ANALYSIS]</scope>
    <source>
        <strain>AX2</strain>
    </source>
</reference>
<dbReference type="EC" id="3.6.5.-" evidence="2"/>
<dbReference type="EMBL" id="L13999">
    <property type="protein sequence ID" value="AAC37343.1"/>
    <property type="molecule type" value="mRNA"/>
</dbReference>
<dbReference type="EMBL" id="AAFI02000104">
    <property type="protein sequence ID" value="EAL63491.1"/>
    <property type="molecule type" value="Genomic_DNA"/>
</dbReference>
<dbReference type="EMBL" id="AM168454">
    <property type="protein sequence ID" value="CAJ44836.1"/>
    <property type="molecule type" value="Genomic_DNA"/>
</dbReference>
<dbReference type="RefSeq" id="XP_637058.1">
    <property type="nucleotide sequence ID" value="XM_631966.1"/>
</dbReference>
<dbReference type="SMR" id="P32255"/>
<dbReference type="FunCoup" id="P32255">
    <property type="interactions" value="290"/>
</dbReference>
<dbReference type="IntAct" id="P32255">
    <property type="interactions" value="1"/>
</dbReference>
<dbReference type="STRING" id="44689.P32255"/>
<dbReference type="PaxDb" id="44689-DDB0191380"/>
<dbReference type="EnsemblProtists" id="EAL63491">
    <property type="protein sequence ID" value="EAL63491"/>
    <property type="gene ID" value="DDB_G0287689"/>
</dbReference>
<dbReference type="GeneID" id="8626312"/>
<dbReference type="KEGG" id="ddi:DDB_G0287689"/>
<dbReference type="dictyBase" id="DDB_G0287689">
    <property type="gene designation" value="tubA"/>
</dbReference>
<dbReference type="VEuPathDB" id="AmoebaDB:DDB_G0287689"/>
<dbReference type="eggNOG" id="KOG1376">
    <property type="taxonomic scope" value="Eukaryota"/>
</dbReference>
<dbReference type="HOGENOM" id="CLU_015718_0_0_1"/>
<dbReference type="InParanoid" id="P32255"/>
<dbReference type="OMA" id="YMASCIL"/>
<dbReference type="PhylomeDB" id="P32255"/>
<dbReference type="Reactome" id="R-DDI-114608">
    <property type="pathway name" value="Platelet degranulation"/>
</dbReference>
<dbReference type="Reactome" id="R-DDI-5610787">
    <property type="pathway name" value="Hedgehog 'off' state"/>
</dbReference>
<dbReference type="Reactome" id="R-DDI-5617833">
    <property type="pathway name" value="Cilium Assembly"/>
</dbReference>
<dbReference type="Reactome" id="R-DDI-5626467">
    <property type="pathway name" value="RHO GTPases activate IQGAPs"/>
</dbReference>
<dbReference type="Reactome" id="R-DDI-6807878">
    <property type="pathway name" value="COPI-mediated anterograde transport"/>
</dbReference>
<dbReference type="Reactome" id="R-DDI-8955332">
    <property type="pathway name" value="Carboxyterminal post-translational modifications of tubulin"/>
</dbReference>
<dbReference type="Reactome" id="R-DDI-9013407">
    <property type="pathway name" value="RHOH GTPase cycle"/>
</dbReference>
<dbReference type="Reactome" id="R-DDI-9646399">
    <property type="pathway name" value="Aggrephagy"/>
</dbReference>
<dbReference type="Reactome" id="R-DDI-9668328">
    <property type="pathway name" value="Sealing of the nuclear envelope (NE) by ESCRT-III"/>
</dbReference>
<dbReference type="PRO" id="PR:P32255"/>
<dbReference type="Proteomes" id="UP000002195">
    <property type="component" value="Chromosome 5"/>
</dbReference>
<dbReference type="GO" id="GO:0005813">
    <property type="term" value="C:centrosome"/>
    <property type="evidence" value="ECO:0000304"/>
    <property type="project" value="dictyBase"/>
</dbReference>
<dbReference type="GO" id="GO:0005737">
    <property type="term" value="C:cytoplasm"/>
    <property type="evidence" value="ECO:0000318"/>
    <property type="project" value="GO_Central"/>
</dbReference>
<dbReference type="GO" id="GO:0005856">
    <property type="term" value="C:cytoskeleton"/>
    <property type="evidence" value="ECO:0000314"/>
    <property type="project" value="dictyBase"/>
</dbReference>
<dbReference type="GO" id="GO:0005874">
    <property type="term" value="C:microtubule"/>
    <property type="evidence" value="ECO:0000314"/>
    <property type="project" value="dictyBase"/>
</dbReference>
<dbReference type="GO" id="GO:0045335">
    <property type="term" value="C:phagocytic vesicle"/>
    <property type="evidence" value="ECO:0007005"/>
    <property type="project" value="dictyBase"/>
</dbReference>
<dbReference type="GO" id="GO:0005525">
    <property type="term" value="F:GTP binding"/>
    <property type="evidence" value="ECO:0000318"/>
    <property type="project" value="GO_Central"/>
</dbReference>
<dbReference type="GO" id="GO:0016787">
    <property type="term" value="F:hydrolase activity"/>
    <property type="evidence" value="ECO:0007669"/>
    <property type="project" value="UniProtKB-KW"/>
</dbReference>
<dbReference type="GO" id="GO:0046872">
    <property type="term" value="F:metal ion binding"/>
    <property type="evidence" value="ECO:0007669"/>
    <property type="project" value="UniProtKB-KW"/>
</dbReference>
<dbReference type="GO" id="GO:0005200">
    <property type="term" value="F:structural constituent of cytoskeleton"/>
    <property type="evidence" value="ECO:0000314"/>
    <property type="project" value="dictyBase"/>
</dbReference>
<dbReference type="GO" id="GO:0007059">
    <property type="term" value="P:chromosome segregation"/>
    <property type="evidence" value="ECO:0000314"/>
    <property type="project" value="dictyBase"/>
</dbReference>
<dbReference type="GO" id="GO:0000226">
    <property type="term" value="P:microtubule cytoskeleton organization"/>
    <property type="evidence" value="ECO:0000318"/>
    <property type="project" value="GO_Central"/>
</dbReference>
<dbReference type="GO" id="GO:0000278">
    <property type="term" value="P:mitotic cell cycle"/>
    <property type="evidence" value="ECO:0000318"/>
    <property type="project" value="GO_Central"/>
</dbReference>
<dbReference type="CDD" id="cd02186">
    <property type="entry name" value="alpha_tubulin"/>
    <property type="match status" value="1"/>
</dbReference>
<dbReference type="FunFam" id="1.10.287.600:FF:000001">
    <property type="entry name" value="Tubulin alpha chain"/>
    <property type="match status" value="1"/>
</dbReference>
<dbReference type="FunFam" id="3.30.1330.20:FF:000032">
    <property type="entry name" value="Tubulin alpha chain"/>
    <property type="match status" value="1"/>
</dbReference>
<dbReference type="FunFam" id="3.40.50.1440:FF:000004">
    <property type="entry name" value="Tubulin alpha chain"/>
    <property type="match status" value="1"/>
</dbReference>
<dbReference type="Gene3D" id="1.10.287.600">
    <property type="entry name" value="Helix hairpin bin"/>
    <property type="match status" value="1"/>
</dbReference>
<dbReference type="Gene3D" id="3.30.1330.20">
    <property type="entry name" value="Tubulin/FtsZ, C-terminal domain"/>
    <property type="match status" value="1"/>
</dbReference>
<dbReference type="Gene3D" id="3.40.50.1440">
    <property type="entry name" value="Tubulin/FtsZ, GTPase domain"/>
    <property type="match status" value="1"/>
</dbReference>
<dbReference type="InterPro" id="IPR002452">
    <property type="entry name" value="Alpha_tubulin"/>
</dbReference>
<dbReference type="InterPro" id="IPR008280">
    <property type="entry name" value="Tub_FtsZ_C"/>
</dbReference>
<dbReference type="InterPro" id="IPR000217">
    <property type="entry name" value="Tubulin"/>
</dbReference>
<dbReference type="InterPro" id="IPR037103">
    <property type="entry name" value="Tubulin/FtsZ-like_C"/>
</dbReference>
<dbReference type="InterPro" id="IPR018316">
    <property type="entry name" value="Tubulin/FtsZ_2-layer-sand-dom"/>
</dbReference>
<dbReference type="InterPro" id="IPR036525">
    <property type="entry name" value="Tubulin/FtsZ_GTPase_sf"/>
</dbReference>
<dbReference type="InterPro" id="IPR023123">
    <property type="entry name" value="Tubulin_C"/>
</dbReference>
<dbReference type="InterPro" id="IPR017975">
    <property type="entry name" value="Tubulin_CS"/>
</dbReference>
<dbReference type="InterPro" id="IPR003008">
    <property type="entry name" value="Tubulin_FtsZ_GTPase"/>
</dbReference>
<dbReference type="PANTHER" id="PTHR11588">
    <property type="entry name" value="TUBULIN"/>
    <property type="match status" value="1"/>
</dbReference>
<dbReference type="Pfam" id="PF00091">
    <property type="entry name" value="Tubulin"/>
    <property type="match status" value="1"/>
</dbReference>
<dbReference type="Pfam" id="PF03953">
    <property type="entry name" value="Tubulin_C"/>
    <property type="match status" value="1"/>
</dbReference>
<dbReference type="PRINTS" id="PR01162">
    <property type="entry name" value="ALPHATUBULIN"/>
</dbReference>
<dbReference type="PRINTS" id="PR01161">
    <property type="entry name" value="TUBULIN"/>
</dbReference>
<dbReference type="SMART" id="SM00864">
    <property type="entry name" value="Tubulin"/>
    <property type="match status" value="1"/>
</dbReference>
<dbReference type="SMART" id="SM00865">
    <property type="entry name" value="Tubulin_C"/>
    <property type="match status" value="1"/>
</dbReference>
<dbReference type="SUPFAM" id="SSF55307">
    <property type="entry name" value="Tubulin C-terminal domain-like"/>
    <property type="match status" value="1"/>
</dbReference>
<dbReference type="SUPFAM" id="SSF52490">
    <property type="entry name" value="Tubulin nucleotide-binding domain-like"/>
    <property type="match status" value="1"/>
</dbReference>
<dbReference type="PROSITE" id="PS00227">
    <property type="entry name" value="TUBULIN"/>
    <property type="match status" value="1"/>
</dbReference>
<feature type="chain" id="PRO_0000048157" description="Tubulin alpha chain">
    <location>
        <begin position="1"/>
        <end position="457"/>
    </location>
</feature>
<feature type="binding site" evidence="2">
    <location>
        <position position="12"/>
    </location>
    <ligand>
        <name>GTP</name>
        <dbReference type="ChEBI" id="CHEBI:37565"/>
    </ligand>
</feature>
<feature type="binding site" evidence="2">
    <location>
        <position position="77"/>
    </location>
    <ligand>
        <name>GTP</name>
        <dbReference type="ChEBI" id="CHEBI:37565"/>
    </ligand>
</feature>
<feature type="binding site" evidence="2">
    <location>
        <position position="77"/>
    </location>
    <ligand>
        <name>Mg(2+)</name>
        <dbReference type="ChEBI" id="CHEBI:18420"/>
    </ligand>
</feature>
<feature type="binding site" evidence="2">
    <location>
        <position position="146"/>
    </location>
    <ligand>
        <name>GTP</name>
        <dbReference type="ChEBI" id="CHEBI:37565"/>
    </ligand>
</feature>
<feature type="binding site" evidence="2">
    <location>
        <position position="150"/>
    </location>
    <ligand>
        <name>GTP</name>
        <dbReference type="ChEBI" id="CHEBI:37565"/>
    </ligand>
</feature>
<feature type="binding site" evidence="2">
    <location>
        <position position="151"/>
    </location>
    <ligand>
        <name>GTP</name>
        <dbReference type="ChEBI" id="CHEBI:37565"/>
    </ligand>
</feature>
<feature type="binding site" evidence="2">
    <location>
        <position position="186"/>
    </location>
    <ligand>
        <name>GTP</name>
        <dbReference type="ChEBI" id="CHEBI:37565"/>
    </ligand>
</feature>
<feature type="binding site" evidence="2">
    <location>
        <position position="213"/>
    </location>
    <ligand>
        <name>GTP</name>
        <dbReference type="ChEBI" id="CHEBI:37565"/>
    </ligand>
</feature>
<feature type="binding site" evidence="2">
    <location>
        <position position="235"/>
    </location>
    <ligand>
        <name>GTP</name>
        <dbReference type="ChEBI" id="CHEBI:37565"/>
    </ligand>
</feature>
<feature type="site" description="Involved in polymerization">
    <location>
        <position position="457"/>
    </location>
</feature>
<feature type="sequence variant" description="In strain: V34.">
    <original>FM</original>
    <variation>LV</variation>
    <location>
        <begin position="209"/>
        <end position="210"/>
    </location>
</feature>
<feature type="sequence variant" description="In strain: V34.">
    <original>A</original>
    <variation>Y</variation>
    <location>
        <position position="288"/>
    </location>
</feature>
<feature type="sequence variant" description="In strain: V34.">
    <original>FA</original>
    <variation>GL</variation>
    <location>
        <begin position="427"/>
        <end position="428"/>
    </location>
</feature>
<organism>
    <name type="scientific">Dictyostelium discoideum</name>
    <name type="common">Social amoeba</name>
    <dbReference type="NCBI Taxonomy" id="44689"/>
    <lineage>
        <taxon>Eukaryota</taxon>
        <taxon>Amoebozoa</taxon>
        <taxon>Evosea</taxon>
        <taxon>Eumycetozoa</taxon>
        <taxon>Dictyostelia</taxon>
        <taxon>Dictyosteliales</taxon>
        <taxon>Dictyosteliaceae</taxon>
        <taxon>Dictyostelium</taxon>
    </lineage>
</organism>
<protein>
    <recommendedName>
        <fullName>Tubulin alpha chain</fullName>
        <ecNumber evidence="2">3.6.5.-</ecNumber>
    </recommendedName>
    <alternativeName>
        <fullName>Alpha-tubulin</fullName>
    </alternativeName>
</protein>
<proteinExistence type="evidence at protein level"/>
<name>TBA_DICDI</name>
<evidence type="ECO:0000250" key="1"/>
<evidence type="ECO:0000250" key="2">
    <source>
        <dbReference type="UniProtKB" id="P68363"/>
    </source>
</evidence>
<evidence type="ECO:0000305" key="3"/>
<sequence>MGREIISIHIGQAGVQVGNSCWELYCLEHGIERDGSIPADRKQSSDVNNLNKDLGTFFSESTNGKKVVPRAIFLDLEPTVIDEIRTGDYKNLFHPEQLITGKEDAANNYARGHYTVGKELIDVCVDRIRRLADQCDGLQGFLVFHSVGGGTGSGFGSLLLQKLALDYGGKKSKLDFCVYPSPQVSTSVVEPYNSVLSTHSLLEHTDVSFMLDNEAIYNICKNSLDIEKPTYTNLNRLIAQVISSLTSSLRFPGQLNLDINDIQTNLVPFPRLHFVLCSYAPVISREKAHHETITVDNITSAVFSEKNIMAKCQPNLGKYMACCLMYRGDIVPKEAQKAVQNIRSEKSRNVSFVDWSPTGFKCGINNQAPVSTKDSEMAEVKKSVCMLSNTTAISQVFSRINHKFDLMFVKRAFVHWYVGEGMEEGEFAEARDDLLALEKDYESVSASTEGEEQEEEY</sequence>
<comment type="function">
    <text>Tubulin is the major constituent of microtubules, a cylinder consisting of laterally associated linear protofilaments composed of alpha- and beta-tubulin heterodimers. Microtubules grow by the addition of GTP-tubulin dimers to the microtubule end, where a stabilizing cap forms. Below the cap, tubulin dimers are in GDP-bound state, owing to GTPase activity of alpha-tubulin.</text>
</comment>
<comment type="catalytic activity">
    <reaction evidence="2">
        <text>GTP + H2O = GDP + phosphate + H(+)</text>
        <dbReference type="Rhea" id="RHEA:19669"/>
        <dbReference type="ChEBI" id="CHEBI:15377"/>
        <dbReference type="ChEBI" id="CHEBI:15378"/>
        <dbReference type="ChEBI" id="CHEBI:37565"/>
        <dbReference type="ChEBI" id="CHEBI:43474"/>
        <dbReference type="ChEBI" id="CHEBI:58189"/>
    </reaction>
    <physiologicalReaction direction="left-to-right" evidence="2">
        <dbReference type="Rhea" id="RHEA:19670"/>
    </physiologicalReaction>
</comment>
<comment type="cofactor">
    <cofactor evidence="2">
        <name>Mg(2+)</name>
        <dbReference type="ChEBI" id="CHEBI:18420"/>
    </cofactor>
</comment>
<comment type="subunit">
    <text>Dimer of alpha and beta chains. A typical microtubule is a hollow water-filled tube with an outer diameter of 25 nm and an inner diameter of 15 nM. Alpha-beta heterodimers associate head-to-tail to form protofilaments running lengthwise along the microtubule wall with the beta-tubulin subunit facing the microtubule plus end conferring a structural polarity. Microtubules usually have 13 protofilaments but different protofilament numbers can be found in some organisms and specialized cells.</text>
</comment>
<comment type="subcellular location">
    <subcellularLocation>
        <location>Cytoplasm</location>
        <location>Cytoskeleton</location>
    </subcellularLocation>
</comment>
<comment type="PTM">
    <text evidence="1">Undergoes a tyrosination/detyrosination cycle, the cyclic removal and re-addition of a C-terminal tyrosine residue by the enzymes tubulin tyrosine carboxypeptidase (TTCP) and tubulin tyrosine ligase (TTL), respectively.</text>
</comment>
<comment type="similarity">
    <text evidence="3">Belongs to the tubulin family.</text>
</comment>
<accession>P32255</accession>
<accession>A0AAL2</accession>
<accession>Q54JU4</accession>
<keyword id="KW-0963">Cytoplasm</keyword>
<keyword id="KW-0206">Cytoskeleton</keyword>
<keyword id="KW-0342">GTP-binding</keyword>
<keyword id="KW-0378">Hydrolase</keyword>
<keyword id="KW-0460">Magnesium</keyword>
<keyword id="KW-0479">Metal-binding</keyword>
<keyword id="KW-0493">Microtubule</keyword>
<keyword id="KW-0547">Nucleotide-binding</keyword>
<keyword id="KW-1185">Reference proteome</keyword>
<gene>
    <name type="primary">tubA</name>
    <name type="ORF">DDB_G0287689</name>
</gene>